<sequence length="473" mass="51751">MSLSRRRFIQATGATLAASALPLQAQAAETPVALPIPPLLESRRGQPLFLTLQRLHWTFAAGRRAATWGINGGYLGPTVRVYNGDDVNIIYNNRLTEPVAMTVSGLQVPGTLMGGAARMMSPGADWSPVLPIRQTAGTCWYHANTPNRMAPHIYNGLAGLWLVEDAVSKVLPLPNHYGVDDFPLIIQDKRLDNFGQPVYNPPASGGFLGDTLLVNGAQSPFVEVSRGWVRLRLLNASNSRCYQLQLSDGRAMHVVAGDQGFLPAPVPVIRLSLAPGERREILIDMSKGEEVAITAGEAAGLMDRVRGFFEPSSILVNTTVLTLKPTGLLPLVTDNLPMRLLSDQLIDGGISRTREFSLGGSTPDINGALWNMSRNDFQSLQGSFERWIVHTNTPQAFHIQGVAFLIKRVNGNTPLPEDQGWKDTVWVDNEVELLVWFPQVAPDHFPYLYYSQTLEMADRGAAGQFVVRPQSVG</sequence>
<evidence type="ECO:0000250" key="1"/>
<evidence type="ECO:0000255" key="2">
    <source>
        <dbReference type="PROSITE-ProRule" id="PRU00648"/>
    </source>
</evidence>
<evidence type="ECO:0000305" key="3"/>
<dbReference type="EMBL" id="AP008232">
    <property type="protein sequence ID" value="BAE73552.1"/>
    <property type="molecule type" value="Genomic_DNA"/>
</dbReference>
<dbReference type="RefSeq" id="WP_011410140.1">
    <property type="nucleotide sequence ID" value="NC_007712.1"/>
</dbReference>
<dbReference type="SMR" id="Q2NWC3"/>
<dbReference type="STRING" id="343509.SG0277"/>
<dbReference type="KEGG" id="sgl:SG0277"/>
<dbReference type="eggNOG" id="COG2132">
    <property type="taxonomic scope" value="Bacteria"/>
</dbReference>
<dbReference type="HOGENOM" id="CLU_009100_2_4_6"/>
<dbReference type="OrthoDB" id="9757546at2"/>
<dbReference type="Proteomes" id="UP000001932">
    <property type="component" value="Chromosome"/>
</dbReference>
<dbReference type="GO" id="GO:0032153">
    <property type="term" value="C:cell division site"/>
    <property type="evidence" value="ECO:0007669"/>
    <property type="project" value="UniProtKB-UniRule"/>
</dbReference>
<dbReference type="GO" id="GO:0030288">
    <property type="term" value="C:outer membrane-bounded periplasmic space"/>
    <property type="evidence" value="ECO:0007669"/>
    <property type="project" value="UniProtKB-UniRule"/>
</dbReference>
<dbReference type="GO" id="GO:0005507">
    <property type="term" value="F:copper ion binding"/>
    <property type="evidence" value="ECO:0007669"/>
    <property type="project" value="InterPro"/>
</dbReference>
<dbReference type="GO" id="GO:0016491">
    <property type="term" value="F:oxidoreductase activity"/>
    <property type="evidence" value="ECO:0007669"/>
    <property type="project" value="InterPro"/>
</dbReference>
<dbReference type="GO" id="GO:0043093">
    <property type="term" value="P:FtsZ-dependent cytokinesis"/>
    <property type="evidence" value="ECO:0007669"/>
    <property type="project" value="UniProtKB-UniRule"/>
</dbReference>
<dbReference type="CDD" id="cd13867">
    <property type="entry name" value="CuRO_2_CueO_FtsP"/>
    <property type="match status" value="1"/>
</dbReference>
<dbReference type="Gene3D" id="2.60.40.420">
    <property type="entry name" value="Cupredoxins - blue copper proteins"/>
    <property type="match status" value="3"/>
</dbReference>
<dbReference type="InterPro" id="IPR011707">
    <property type="entry name" value="Cu-oxidase-like_N"/>
</dbReference>
<dbReference type="InterPro" id="IPR011706">
    <property type="entry name" value="Cu-oxidase_C"/>
</dbReference>
<dbReference type="InterPro" id="IPR045087">
    <property type="entry name" value="Cu-oxidase_fam"/>
</dbReference>
<dbReference type="InterPro" id="IPR008972">
    <property type="entry name" value="Cupredoxin"/>
</dbReference>
<dbReference type="InterPro" id="IPR026589">
    <property type="entry name" value="FtsP"/>
</dbReference>
<dbReference type="InterPro" id="IPR006311">
    <property type="entry name" value="TAT_signal"/>
</dbReference>
<dbReference type="NCBIfam" id="NF008135">
    <property type="entry name" value="PRK10883.1"/>
    <property type="match status" value="1"/>
</dbReference>
<dbReference type="PANTHER" id="PTHR48267:SF1">
    <property type="entry name" value="BILIRUBIN OXIDASE"/>
    <property type="match status" value="1"/>
</dbReference>
<dbReference type="PANTHER" id="PTHR48267">
    <property type="entry name" value="CUPREDOXIN SUPERFAMILY PROTEIN"/>
    <property type="match status" value="1"/>
</dbReference>
<dbReference type="Pfam" id="PF07731">
    <property type="entry name" value="Cu-oxidase_2"/>
    <property type="match status" value="1"/>
</dbReference>
<dbReference type="Pfam" id="PF07732">
    <property type="entry name" value="Cu-oxidase_3"/>
    <property type="match status" value="1"/>
</dbReference>
<dbReference type="SUPFAM" id="SSF49503">
    <property type="entry name" value="Cupredoxins"/>
    <property type="match status" value="3"/>
</dbReference>
<dbReference type="PROSITE" id="PS51318">
    <property type="entry name" value="TAT"/>
    <property type="match status" value="1"/>
</dbReference>
<gene>
    <name type="primary">ftsP</name>
    <name type="ordered locus">SG0277</name>
</gene>
<name>FTSP_SODGM</name>
<comment type="function">
    <text evidence="1">Cell division protein that is required for growth during stress conditions. May be involved in protecting or stabilizing the divisomal assembly under conditions of stress (By similarity).</text>
</comment>
<comment type="subcellular location">
    <subcellularLocation>
        <location evidence="1">Periplasm</location>
    </subcellularLocation>
    <text evidence="1">Localizes to the division septum.</text>
</comment>
<comment type="PTM">
    <text>Predicted to be exported by the Tat system. The position of the signal peptide cleavage has not been experimentally proven.</text>
</comment>
<comment type="similarity">
    <text evidence="3">Belongs to the FtsP family.</text>
</comment>
<organism>
    <name type="scientific">Sodalis glossinidius (strain morsitans)</name>
    <dbReference type="NCBI Taxonomy" id="343509"/>
    <lineage>
        <taxon>Bacteria</taxon>
        <taxon>Pseudomonadati</taxon>
        <taxon>Pseudomonadota</taxon>
        <taxon>Gammaproteobacteria</taxon>
        <taxon>Enterobacterales</taxon>
        <taxon>Bruguierivoracaceae</taxon>
        <taxon>Sodalis</taxon>
    </lineage>
</organism>
<keyword id="KW-0131">Cell cycle</keyword>
<keyword id="KW-0132">Cell division</keyword>
<keyword id="KW-0574">Periplasm</keyword>
<keyword id="KW-0732">Signal</keyword>
<reference key="1">
    <citation type="journal article" date="2006" name="Genome Res.">
        <title>Massive genome erosion and functional adaptations provide insights into the symbiotic lifestyle of Sodalis glossinidius in the tsetse host.</title>
        <authorList>
            <person name="Toh H."/>
            <person name="Weiss B.L."/>
            <person name="Perkin S.A.H."/>
            <person name="Yamashita A."/>
            <person name="Oshima K."/>
            <person name="Hattori M."/>
            <person name="Aksoy S."/>
        </authorList>
    </citation>
    <scope>NUCLEOTIDE SEQUENCE [LARGE SCALE GENOMIC DNA]</scope>
    <source>
        <strain>morsitans</strain>
    </source>
</reference>
<proteinExistence type="inferred from homology"/>
<accession>Q2NWC3</accession>
<feature type="signal peptide" description="Tat-type signal" evidence="2">
    <location>
        <begin position="1"/>
        <end position="27"/>
    </location>
</feature>
<feature type="chain" id="PRO_0000416015" description="Cell division protein FtsP">
    <location>
        <begin position="28"/>
        <end position="473"/>
    </location>
</feature>
<protein>
    <recommendedName>
        <fullName>Cell division protein FtsP</fullName>
    </recommendedName>
</protein>